<keyword id="KW-0067">ATP-binding</keyword>
<keyword id="KW-0997">Cell inner membrane</keyword>
<keyword id="KW-1003">Cell membrane</keyword>
<keyword id="KW-0418">Kinase</keyword>
<keyword id="KW-0472">Membrane</keyword>
<keyword id="KW-0547">Nucleotide-binding</keyword>
<keyword id="KW-0597">Phosphoprotein</keyword>
<keyword id="KW-0808">Transferase</keyword>
<keyword id="KW-0812">Transmembrane</keyword>
<keyword id="KW-1133">Transmembrane helix</keyword>
<keyword id="KW-0902">Two-component regulatory system</keyword>
<protein>
    <recommendedName>
        <fullName evidence="2">Sensor histidine kinase RcsC</fullName>
        <ecNumber evidence="2">2.7.13.3</ecNumber>
    </recommendedName>
</protein>
<reference key="1">
    <citation type="journal article" date="2001" name="Nature">
        <title>Complete genome sequence of a multiple drug resistant Salmonella enterica serovar Typhi CT18.</title>
        <authorList>
            <person name="Parkhill J."/>
            <person name="Dougan G."/>
            <person name="James K.D."/>
            <person name="Thomson N.R."/>
            <person name="Pickard D."/>
            <person name="Wain J."/>
            <person name="Churcher C.M."/>
            <person name="Mungall K.L."/>
            <person name="Bentley S.D."/>
            <person name="Holden M.T.G."/>
            <person name="Sebaihia M."/>
            <person name="Baker S."/>
            <person name="Basham D."/>
            <person name="Brooks K."/>
            <person name="Chillingworth T."/>
            <person name="Connerton P."/>
            <person name="Cronin A."/>
            <person name="Davis P."/>
            <person name="Davies R.M."/>
            <person name="Dowd L."/>
            <person name="White N."/>
            <person name="Farrar J."/>
            <person name="Feltwell T."/>
            <person name="Hamlin N."/>
            <person name="Haque A."/>
            <person name="Hien T.T."/>
            <person name="Holroyd S."/>
            <person name="Jagels K."/>
            <person name="Krogh A."/>
            <person name="Larsen T.S."/>
            <person name="Leather S."/>
            <person name="Moule S."/>
            <person name="O'Gaora P."/>
            <person name="Parry C."/>
            <person name="Quail M.A."/>
            <person name="Rutherford K.M."/>
            <person name="Simmonds M."/>
            <person name="Skelton J."/>
            <person name="Stevens K."/>
            <person name="Whitehead S."/>
            <person name="Barrell B.G."/>
        </authorList>
    </citation>
    <scope>NUCLEOTIDE SEQUENCE [LARGE SCALE GENOMIC DNA]</scope>
    <source>
        <strain>CT18</strain>
    </source>
</reference>
<reference key="2">
    <citation type="journal article" date="2003" name="J. Bacteriol.">
        <title>Comparative genomics of Salmonella enterica serovar Typhi strains Ty2 and CT18.</title>
        <authorList>
            <person name="Deng W."/>
            <person name="Liou S.-R."/>
            <person name="Plunkett G. III"/>
            <person name="Mayhew G.F."/>
            <person name="Rose D.J."/>
            <person name="Burland V."/>
            <person name="Kodoyianni V."/>
            <person name="Schwartz D.C."/>
            <person name="Blattner F.R."/>
        </authorList>
    </citation>
    <scope>NUCLEOTIDE SEQUENCE [LARGE SCALE GENOMIC DNA]</scope>
    <source>
        <strain>ATCC 700931 / Ty2</strain>
    </source>
</reference>
<reference key="3">
    <citation type="journal article" date="1996" name="J. Bacteriol.">
        <title>Characterization of the rcsA and rcsB genes from Salmonella typhi: rcsB through tviA is involved in regulation of Vi antigen synthesis.</title>
        <authorList>
            <person name="Virlogeux I."/>
            <person name="Waxin H."/>
            <person name="Ecobichon C."/>
            <person name="Lee J.O."/>
            <person name="Popoff M.Y."/>
        </authorList>
    </citation>
    <scope>NUCLEOTIDE SEQUENCE [GENOMIC DNA] OF 846-948</scope>
    <source>
        <strain>ATCC 700931 / Ty2</strain>
    </source>
</reference>
<dbReference type="EC" id="2.7.13.3" evidence="2"/>
<dbReference type="EMBL" id="AL513382">
    <property type="protein sequence ID" value="CAD07502.1"/>
    <property type="molecule type" value="Genomic_DNA"/>
</dbReference>
<dbReference type="EMBL" id="AE014613">
    <property type="protein sequence ID" value="AAO68299.1"/>
    <property type="molecule type" value="Genomic_DNA"/>
</dbReference>
<dbReference type="EMBL" id="X87830">
    <property type="protein sequence ID" value="CAA61095.1"/>
    <property type="molecule type" value="Genomic_DNA"/>
</dbReference>
<dbReference type="RefSeq" id="NP_456815.1">
    <property type="nucleotide sequence ID" value="NC_003198.1"/>
</dbReference>
<dbReference type="RefSeq" id="WP_000876074.1">
    <property type="nucleotide sequence ID" value="NZ_WSUR01000051.1"/>
</dbReference>
<dbReference type="SMR" id="Q56128"/>
<dbReference type="STRING" id="220341.gene:17586399"/>
<dbReference type="KEGG" id="stt:t0594"/>
<dbReference type="KEGG" id="sty:STY2496"/>
<dbReference type="PATRIC" id="fig|220341.7.peg.2528"/>
<dbReference type="eggNOG" id="COG0784">
    <property type="taxonomic scope" value="Bacteria"/>
</dbReference>
<dbReference type="eggNOG" id="COG2205">
    <property type="taxonomic scope" value="Bacteria"/>
</dbReference>
<dbReference type="HOGENOM" id="CLU_000445_15_6_6"/>
<dbReference type="OMA" id="GLRDMPI"/>
<dbReference type="BRENDA" id="2.7.13.3">
    <property type="organism ID" value="5557"/>
</dbReference>
<dbReference type="Proteomes" id="UP000000541">
    <property type="component" value="Chromosome"/>
</dbReference>
<dbReference type="Proteomes" id="UP000002670">
    <property type="component" value="Chromosome"/>
</dbReference>
<dbReference type="GO" id="GO:0005886">
    <property type="term" value="C:plasma membrane"/>
    <property type="evidence" value="ECO:0007669"/>
    <property type="project" value="UniProtKB-SubCell"/>
</dbReference>
<dbReference type="GO" id="GO:0005524">
    <property type="term" value="F:ATP binding"/>
    <property type="evidence" value="ECO:0007669"/>
    <property type="project" value="UniProtKB-UniRule"/>
</dbReference>
<dbReference type="GO" id="GO:0000155">
    <property type="term" value="F:phosphorelay sensor kinase activity"/>
    <property type="evidence" value="ECO:0007669"/>
    <property type="project" value="UniProtKB-UniRule"/>
</dbReference>
<dbReference type="GO" id="GO:0006355">
    <property type="term" value="P:regulation of DNA-templated transcription"/>
    <property type="evidence" value="ECO:0007669"/>
    <property type="project" value="InterPro"/>
</dbReference>
<dbReference type="CDD" id="cd16922">
    <property type="entry name" value="HATPase_EvgS-ArcB-TorS-like"/>
    <property type="match status" value="1"/>
</dbReference>
<dbReference type="CDD" id="cd00082">
    <property type="entry name" value="HisKA"/>
    <property type="match status" value="1"/>
</dbReference>
<dbReference type="CDD" id="cd17546">
    <property type="entry name" value="REC_hyHK_CKI1_RcsC-like"/>
    <property type="match status" value="1"/>
</dbReference>
<dbReference type="FunFam" id="1.10.287.130:FF:000019">
    <property type="entry name" value="Sensor histidine kinase RcsC"/>
    <property type="match status" value="1"/>
</dbReference>
<dbReference type="FunFam" id="3.30.565.10:FF:000010">
    <property type="entry name" value="Sensor histidine kinase RcsC"/>
    <property type="match status" value="1"/>
</dbReference>
<dbReference type="FunFam" id="3.40.50.2300:FF:000121">
    <property type="entry name" value="Sensor histidine kinase RcsC"/>
    <property type="match status" value="1"/>
</dbReference>
<dbReference type="Gene3D" id="1.10.287.130">
    <property type="match status" value="1"/>
</dbReference>
<dbReference type="Gene3D" id="3.40.50.10970">
    <property type="match status" value="1"/>
</dbReference>
<dbReference type="Gene3D" id="3.40.50.2300">
    <property type="match status" value="1"/>
</dbReference>
<dbReference type="Gene3D" id="3.30.565.10">
    <property type="entry name" value="Histidine kinase-like ATPase, C-terminal domain"/>
    <property type="match status" value="1"/>
</dbReference>
<dbReference type="HAMAP" id="MF_00979">
    <property type="entry name" value="RcsC"/>
    <property type="match status" value="1"/>
</dbReference>
<dbReference type="InterPro" id="IPR011006">
    <property type="entry name" value="CheY-like_superfamily"/>
</dbReference>
<dbReference type="InterPro" id="IPR036890">
    <property type="entry name" value="HATPase_C_sf"/>
</dbReference>
<dbReference type="InterPro" id="IPR005467">
    <property type="entry name" value="His_kinase_dom"/>
</dbReference>
<dbReference type="InterPro" id="IPR003661">
    <property type="entry name" value="HisK_dim/P_dom"/>
</dbReference>
<dbReference type="InterPro" id="IPR036097">
    <property type="entry name" value="HisK_dim/P_sf"/>
</dbReference>
<dbReference type="InterPro" id="IPR030856">
    <property type="entry name" value="RcsC"/>
</dbReference>
<dbReference type="InterPro" id="IPR038388">
    <property type="entry name" value="RcsC_C_sf"/>
</dbReference>
<dbReference type="InterPro" id="IPR004358">
    <property type="entry name" value="Sig_transdc_His_kin-like_C"/>
</dbReference>
<dbReference type="InterPro" id="IPR019017">
    <property type="entry name" value="Sig_transdc_His_kin_a/b-loop_C"/>
</dbReference>
<dbReference type="InterPro" id="IPR001789">
    <property type="entry name" value="Sig_transdc_resp-reg_receiver"/>
</dbReference>
<dbReference type="NCBIfam" id="NF008099">
    <property type="entry name" value="PRK10841.1"/>
    <property type="match status" value="1"/>
</dbReference>
<dbReference type="PANTHER" id="PTHR45339">
    <property type="entry name" value="HYBRID SIGNAL TRANSDUCTION HISTIDINE KINASE J"/>
    <property type="match status" value="1"/>
</dbReference>
<dbReference type="PANTHER" id="PTHR45339:SF1">
    <property type="entry name" value="HYBRID SIGNAL TRANSDUCTION HISTIDINE KINASE J"/>
    <property type="match status" value="1"/>
</dbReference>
<dbReference type="Pfam" id="PF02518">
    <property type="entry name" value="HATPase_c"/>
    <property type="match status" value="1"/>
</dbReference>
<dbReference type="Pfam" id="PF00512">
    <property type="entry name" value="HisKA"/>
    <property type="match status" value="1"/>
</dbReference>
<dbReference type="Pfam" id="PF09456">
    <property type="entry name" value="RcsC"/>
    <property type="match status" value="1"/>
</dbReference>
<dbReference type="Pfam" id="PF00072">
    <property type="entry name" value="Response_reg"/>
    <property type="match status" value="1"/>
</dbReference>
<dbReference type="PRINTS" id="PR00344">
    <property type="entry name" value="BCTRLSENSOR"/>
</dbReference>
<dbReference type="SMART" id="SM00387">
    <property type="entry name" value="HATPase_c"/>
    <property type="match status" value="1"/>
</dbReference>
<dbReference type="SMART" id="SM00388">
    <property type="entry name" value="HisKA"/>
    <property type="match status" value="1"/>
</dbReference>
<dbReference type="SMART" id="SM00448">
    <property type="entry name" value="REC"/>
    <property type="match status" value="1"/>
</dbReference>
<dbReference type="SUPFAM" id="SSF55874">
    <property type="entry name" value="ATPase domain of HSP90 chaperone/DNA topoisomerase II/histidine kinase"/>
    <property type="match status" value="1"/>
</dbReference>
<dbReference type="SUPFAM" id="SSF52172">
    <property type="entry name" value="CheY-like"/>
    <property type="match status" value="2"/>
</dbReference>
<dbReference type="SUPFAM" id="SSF47384">
    <property type="entry name" value="Homodimeric domain of signal transducing histidine kinase"/>
    <property type="match status" value="1"/>
</dbReference>
<dbReference type="PROSITE" id="PS51426">
    <property type="entry name" value="ABL"/>
    <property type="match status" value="1"/>
</dbReference>
<dbReference type="PROSITE" id="PS50109">
    <property type="entry name" value="HIS_KIN"/>
    <property type="match status" value="1"/>
</dbReference>
<dbReference type="PROSITE" id="PS50110">
    <property type="entry name" value="RESPONSE_REGULATORY"/>
    <property type="match status" value="1"/>
</dbReference>
<name>RCSC_SALTI</name>
<accession>Q56128</accession>
<proteinExistence type="inferred from homology"/>
<evidence type="ECO:0000255" key="1"/>
<evidence type="ECO:0000255" key="2">
    <source>
        <dbReference type="HAMAP-Rule" id="MF_00979"/>
    </source>
</evidence>
<evidence type="ECO:0000255" key="3">
    <source>
        <dbReference type="PROSITE-ProRule" id="PRU00169"/>
    </source>
</evidence>
<sequence length="948" mass="106237">MKYLASFRTTLKVSRYLFRALALLIWLLIAFVSVFYIVNALHQRESEIRQEFNLSSDQAQRFIQRTSDVMKELKYIAENRLTAENGVMSSRARDDKMVVPDFEPLFADSDCAAMGSAWRGSLESLAWFMRYWRDNFSAAYDLNRVFLIGSDNLCMANFGLREMPVERDDALKALHERIMKYRNAPQEESGNNLFWISQGARQGVGYFYALTPVYLANRLQALLGVEQSIRMENFFTPGSLPMGVTIIDENGHSLISLTGPDGIIKAEPRWMQERSWFGYTPGFRELVLKKSLPPSSLSIVYSVPVDLVLERIRILILNAILLNVLVGAGLFTLARMYERRIFIPAESDAQRLEEHEQFNRKIVASAPVGICILRTIDGVNILSNELAHTYLNMLTHEDRQRLTQIICGQQVNFVDVLTSNNTNLQISFVHSRYRNENVAICVLVDVSTRVKMEESLQEMAQAAEQASQSKSMFLATVSHELRTPLYGIIGNLDLLQTKELPKGVDRLVTAMNNSSSLLLKIISDILDFSKIESEQLKIEPREFSPREVMNHITANYLPLVVRKQLGLYCFIEPDVPVSLNGDPMRLQQVISNLLSNAIKFTDIGCIVLHVRCDGDYLSIRVRDTGVGIPAKEVVRLFDPFFQVGTGVQRNFQGTGLGLAICEKLISMMDGDISVDSEPGMGSQFTLRIPLYGAQYPVKKSVEGLAGTCCWLAVRNTSLCQFIETSLARSGVHTQRYEGQEPAADDILIVDDALEHTWQGRAAVVFCRRHIGIPLERAPGEWVHSVASVHELPALLARIYSIELDSEALSSALPTTDKTADSNDDMMILVVDDHPINRRLLADQLGSLGYQCKTANDGVDALNVLSKNAIDIVLSDVNMPNMDGYRLTQRIRQLGLTLPVVGVTANALAEEKQRCLESGMDSCLSKPVTLDALKQTLAVYAERVRKTRA</sequence>
<comment type="function">
    <text evidence="2">Component of the Rcs signaling system, which controls transcription of numerous genes. RcsC functions as a membrane-associated protein kinase that phosphorylates RcsD in response to environmental signals. The phosphoryl group is then transferred to the response regulator RcsB.</text>
</comment>
<comment type="catalytic activity">
    <reaction evidence="2">
        <text>ATP + protein L-histidine = ADP + protein N-phospho-L-histidine.</text>
        <dbReference type="EC" id="2.7.13.3"/>
    </reaction>
</comment>
<comment type="subunit">
    <text evidence="2">Interacts with RcsD.</text>
</comment>
<comment type="subcellular location">
    <subcellularLocation>
        <location evidence="2">Cell inner membrane</location>
        <topology evidence="2">Multi-pass membrane protein</topology>
    </subcellularLocation>
</comment>
<comment type="PTM">
    <text evidence="2">Autophosphorylated. Activation probably requires a transfer of a phosphate group from a His in the transmitter domain to an Asp in the receiver domain.</text>
</comment>
<comment type="similarity">
    <text evidence="2">Belongs to the RcsC family.</text>
</comment>
<feature type="chain" id="PRO_0000074857" description="Sensor histidine kinase RcsC">
    <location>
        <begin position="1"/>
        <end position="948"/>
    </location>
</feature>
<feature type="topological domain" description="Cytoplasmic" evidence="1">
    <location>
        <begin position="1"/>
        <end position="20"/>
    </location>
</feature>
<feature type="transmembrane region" description="Helical" evidence="2">
    <location>
        <begin position="21"/>
        <end position="41"/>
    </location>
</feature>
<feature type="topological domain" description="Periplasmic" evidence="1">
    <location>
        <begin position="42"/>
        <end position="313"/>
    </location>
</feature>
<feature type="transmembrane region" description="Helical" evidence="2">
    <location>
        <begin position="314"/>
        <end position="334"/>
    </location>
</feature>
<feature type="topological domain" description="Cytoplasmic" evidence="1">
    <location>
        <begin position="335"/>
        <end position="948"/>
    </location>
</feature>
<feature type="domain" description="PAS" evidence="2">
    <location>
        <begin position="357"/>
        <end position="425"/>
    </location>
</feature>
<feature type="domain" description="Histidine kinase" evidence="2">
    <location>
        <begin position="476"/>
        <end position="692"/>
    </location>
</feature>
<feature type="domain" description="ABL" evidence="2">
    <location>
        <begin position="705"/>
        <end position="805"/>
    </location>
</feature>
<feature type="domain" description="Response regulatory" evidence="3">
    <location>
        <begin position="826"/>
        <end position="940"/>
    </location>
</feature>
<feature type="modified residue" description="Phosphohistidine; by autocatalysis" evidence="2">
    <location>
        <position position="479"/>
    </location>
</feature>
<feature type="modified residue" description="4-aspartylphosphate" evidence="2">
    <location>
        <position position="875"/>
    </location>
</feature>
<organism>
    <name type="scientific">Salmonella typhi</name>
    <dbReference type="NCBI Taxonomy" id="90370"/>
    <lineage>
        <taxon>Bacteria</taxon>
        <taxon>Pseudomonadati</taxon>
        <taxon>Pseudomonadota</taxon>
        <taxon>Gammaproteobacteria</taxon>
        <taxon>Enterobacterales</taxon>
        <taxon>Enterobacteriaceae</taxon>
        <taxon>Salmonella</taxon>
    </lineage>
</organism>
<gene>
    <name evidence="2" type="primary">rcsC</name>
    <name type="ordered locus">STY2496</name>
    <name type="ordered locus">t0594</name>
</gene>